<name>DBX1_MOUSE</name>
<evidence type="ECO:0000255" key="1">
    <source>
        <dbReference type="PROSITE-ProRule" id="PRU00108"/>
    </source>
</evidence>
<evidence type="ECO:0000256" key="2">
    <source>
        <dbReference type="SAM" id="MobiDB-lite"/>
    </source>
</evidence>
<evidence type="ECO:0000269" key="3">
    <source>
    </source>
</evidence>
<evidence type="ECO:0000305" key="4"/>
<organism>
    <name type="scientific">Mus musculus</name>
    <name type="common">Mouse</name>
    <dbReference type="NCBI Taxonomy" id="10090"/>
    <lineage>
        <taxon>Eukaryota</taxon>
        <taxon>Metazoa</taxon>
        <taxon>Chordata</taxon>
        <taxon>Craniata</taxon>
        <taxon>Vertebrata</taxon>
        <taxon>Euteleostomi</taxon>
        <taxon>Mammalia</taxon>
        <taxon>Eutheria</taxon>
        <taxon>Euarchontoglires</taxon>
        <taxon>Glires</taxon>
        <taxon>Rodentia</taxon>
        <taxon>Myomorpha</taxon>
        <taxon>Muroidea</taxon>
        <taxon>Muridae</taxon>
        <taxon>Murinae</taxon>
        <taxon>Mus</taxon>
        <taxon>Mus</taxon>
    </lineage>
</organism>
<proteinExistence type="evidence at transcript level"/>
<gene>
    <name type="primary">Dbx1</name>
    <name type="synonym">Dbx</name>
</gene>
<keyword id="KW-0217">Developmental protein</keyword>
<keyword id="KW-0238">DNA-binding</keyword>
<keyword id="KW-0371">Homeobox</keyword>
<keyword id="KW-0539">Nucleus</keyword>
<keyword id="KW-1185">Reference proteome</keyword>
<accession>P52950</accession>
<accession>Q3UYQ7</accession>
<feature type="chain" id="PRO_0000048864" description="Homeobox protein DBX1">
    <location>
        <begin position="1"/>
        <end position="335"/>
    </location>
</feature>
<feature type="DNA-binding region" description="Homeobox" evidence="1">
    <location>
        <begin position="181"/>
        <end position="240"/>
    </location>
</feature>
<feature type="region of interest" description="Disordered" evidence="2">
    <location>
        <begin position="58"/>
        <end position="102"/>
    </location>
</feature>
<feature type="region of interest" description="Disordered" evidence="2">
    <location>
        <begin position="240"/>
        <end position="335"/>
    </location>
</feature>
<feature type="compositionally biased region" description="Low complexity" evidence="2">
    <location>
        <begin position="83"/>
        <end position="95"/>
    </location>
</feature>
<feature type="compositionally biased region" description="Low complexity" evidence="2">
    <location>
        <begin position="299"/>
        <end position="317"/>
    </location>
</feature>
<feature type="compositionally biased region" description="Acidic residues" evidence="2">
    <location>
        <begin position="318"/>
        <end position="335"/>
    </location>
</feature>
<protein>
    <recommendedName>
        <fullName>Homeobox protein DBX1</fullName>
    </recommendedName>
    <alternativeName>
        <fullName>Developing brain homeobox protein 1</fullName>
    </alternativeName>
</protein>
<dbReference type="EMBL" id="S75837">
    <property type="protein sequence ID" value="AAB33013.1"/>
    <property type="molecule type" value="mRNA"/>
</dbReference>
<dbReference type="EMBL" id="BC082541">
    <property type="protein sequence ID" value="AAH82541.1"/>
    <property type="molecule type" value="mRNA"/>
</dbReference>
<dbReference type="EMBL" id="AK134473">
    <property type="protein sequence ID" value="BAE22155.1"/>
    <property type="molecule type" value="mRNA"/>
</dbReference>
<dbReference type="CCDS" id="CCDS21306.1"/>
<dbReference type="PIR" id="E41606">
    <property type="entry name" value="E41606"/>
</dbReference>
<dbReference type="RefSeq" id="NP_001005232.1">
    <property type="nucleotide sequence ID" value="NM_001005232.1"/>
</dbReference>
<dbReference type="SMR" id="P52950"/>
<dbReference type="BioGRID" id="199062">
    <property type="interactions" value="2"/>
</dbReference>
<dbReference type="FunCoup" id="P52950">
    <property type="interactions" value="123"/>
</dbReference>
<dbReference type="STRING" id="10090.ENSMUSP00000032717"/>
<dbReference type="iPTMnet" id="P52950"/>
<dbReference type="PhosphoSitePlus" id="P52950"/>
<dbReference type="PaxDb" id="10090-ENSMUSP00000032717"/>
<dbReference type="Antibodypedia" id="42553">
    <property type="antibodies" value="106 antibodies from 23 providers"/>
</dbReference>
<dbReference type="DNASU" id="13172"/>
<dbReference type="Ensembl" id="ENSMUST00000032717.7">
    <property type="protein sequence ID" value="ENSMUSP00000032717.7"/>
    <property type="gene ID" value="ENSMUSG00000030507.7"/>
</dbReference>
<dbReference type="GeneID" id="13172"/>
<dbReference type="KEGG" id="mmu:13172"/>
<dbReference type="UCSC" id="uc009hbn.1">
    <property type="organism name" value="mouse"/>
</dbReference>
<dbReference type="AGR" id="MGI:94867"/>
<dbReference type="CTD" id="120237"/>
<dbReference type="MGI" id="MGI:94867">
    <property type="gene designation" value="Dbx1"/>
</dbReference>
<dbReference type="VEuPathDB" id="HostDB:ENSMUSG00000030507"/>
<dbReference type="eggNOG" id="KOG0488">
    <property type="taxonomic scope" value="Eukaryota"/>
</dbReference>
<dbReference type="GeneTree" id="ENSGT00950000183093"/>
<dbReference type="HOGENOM" id="CLU_053401_0_0_1"/>
<dbReference type="InParanoid" id="P52950"/>
<dbReference type="OMA" id="RHSLAYH"/>
<dbReference type="OrthoDB" id="10048112at2759"/>
<dbReference type="PhylomeDB" id="P52950"/>
<dbReference type="TreeFam" id="TF350735"/>
<dbReference type="BioGRID-ORCS" id="13172">
    <property type="hits" value="2 hits in 77 CRISPR screens"/>
</dbReference>
<dbReference type="PRO" id="PR:P52950"/>
<dbReference type="Proteomes" id="UP000000589">
    <property type="component" value="Chromosome 7"/>
</dbReference>
<dbReference type="RNAct" id="P52950">
    <property type="molecule type" value="protein"/>
</dbReference>
<dbReference type="Bgee" id="ENSMUSG00000030507">
    <property type="expression patterns" value="Expressed in neural tube ventricular layer and 51 other cell types or tissues"/>
</dbReference>
<dbReference type="GO" id="GO:0005634">
    <property type="term" value="C:nucleus"/>
    <property type="evidence" value="ECO:0007669"/>
    <property type="project" value="UniProtKB-SubCell"/>
</dbReference>
<dbReference type="GO" id="GO:0003677">
    <property type="term" value="F:DNA binding"/>
    <property type="evidence" value="ECO:0007669"/>
    <property type="project" value="UniProtKB-KW"/>
</dbReference>
<dbReference type="GO" id="GO:0000981">
    <property type="term" value="F:DNA-binding transcription factor activity, RNA polymerase II-specific"/>
    <property type="evidence" value="ECO:0007669"/>
    <property type="project" value="InterPro"/>
</dbReference>
<dbReference type="GO" id="GO:0006357">
    <property type="term" value="P:regulation of transcription by RNA polymerase II"/>
    <property type="evidence" value="ECO:0000315"/>
    <property type="project" value="MGI"/>
</dbReference>
<dbReference type="GO" id="GO:0021521">
    <property type="term" value="P:ventral spinal cord interneuron specification"/>
    <property type="evidence" value="ECO:0000315"/>
    <property type="project" value="MGI"/>
</dbReference>
<dbReference type="CDD" id="cd00086">
    <property type="entry name" value="homeodomain"/>
    <property type="match status" value="1"/>
</dbReference>
<dbReference type="FunFam" id="1.10.10.60:FF:000177">
    <property type="entry name" value="Homeobox protein DBX1"/>
    <property type="match status" value="1"/>
</dbReference>
<dbReference type="Gene3D" id="1.10.10.60">
    <property type="entry name" value="Homeodomain-like"/>
    <property type="match status" value="1"/>
</dbReference>
<dbReference type="InterPro" id="IPR051662">
    <property type="entry name" value="H2.0_Homeobox_NeuralPatt"/>
</dbReference>
<dbReference type="InterPro" id="IPR001356">
    <property type="entry name" value="HD"/>
</dbReference>
<dbReference type="InterPro" id="IPR020479">
    <property type="entry name" value="HD_metazoa"/>
</dbReference>
<dbReference type="InterPro" id="IPR017970">
    <property type="entry name" value="Homeobox_CS"/>
</dbReference>
<dbReference type="InterPro" id="IPR009057">
    <property type="entry name" value="Homeodomain-like_sf"/>
</dbReference>
<dbReference type="InterPro" id="IPR000047">
    <property type="entry name" value="HTH_motif"/>
</dbReference>
<dbReference type="PANTHER" id="PTHR24331">
    <property type="entry name" value="DBX"/>
    <property type="match status" value="1"/>
</dbReference>
<dbReference type="PANTHER" id="PTHR24331:SF6">
    <property type="entry name" value="HOMEOBOX PROTEIN DBX1"/>
    <property type="match status" value="1"/>
</dbReference>
<dbReference type="Pfam" id="PF00046">
    <property type="entry name" value="Homeodomain"/>
    <property type="match status" value="1"/>
</dbReference>
<dbReference type="PRINTS" id="PR00024">
    <property type="entry name" value="HOMEOBOX"/>
</dbReference>
<dbReference type="PRINTS" id="PR00031">
    <property type="entry name" value="HTHREPRESSR"/>
</dbReference>
<dbReference type="SMART" id="SM00389">
    <property type="entry name" value="HOX"/>
    <property type="match status" value="1"/>
</dbReference>
<dbReference type="SUPFAM" id="SSF46689">
    <property type="entry name" value="Homeodomain-like"/>
    <property type="match status" value="1"/>
</dbReference>
<dbReference type="PROSITE" id="PS00027">
    <property type="entry name" value="HOMEOBOX_1"/>
    <property type="match status" value="1"/>
</dbReference>
<dbReference type="PROSITE" id="PS50071">
    <property type="entry name" value="HOMEOBOX_2"/>
    <property type="match status" value="1"/>
</dbReference>
<sequence length="335" mass="36334">MMFPGLLAPPAGYPSLLRPTPTLTLPQSLQSAFSGHSSFLVEDLIRISRPPTYLSRSIPAASLSPPSQEAPAALADSGTSDLGSPGSGSRRGSSPQTALSPASEPTFLKFGVNAILSSAPRRETSPALLQSPPPKTFAFPYFEGSFQPFIRSSYFPASSSVVPIPGTFSWPLAARGKPRRGMLRRAVFSDVQRKALEKTFQKQKYISKPDRKKLASKLGLKDSQVKIWFQNRRMKWRNSKERELLSSGGCREQTLPTKLNPHPDLSDVGQKGPGDEEEDNPGARLAYHAPADPRHLLEGPLPASPAHSSSPGKPSDFSDSDEDEEGEEDEEITVS</sequence>
<reference key="1">
    <citation type="journal article" date="1994" name="Mech. Dev.">
        <title>Mouse homeobox gene Dbx: sequence, gene structure and expression pattern during mid-gestation.</title>
        <authorList>
            <person name="Lu S."/>
            <person name="Wise T.L."/>
            <person name="Ruddle F.H."/>
        </authorList>
    </citation>
    <scope>NUCLEOTIDE SEQUENCE [MRNA]</scope>
</reference>
<reference key="2">
    <citation type="journal article" date="2004" name="Genome Res.">
        <title>The status, quality, and expansion of the NIH full-length cDNA project: the Mammalian Gene Collection (MGC).</title>
        <authorList>
            <consortium name="The MGC Project Team"/>
        </authorList>
    </citation>
    <scope>NUCLEOTIDE SEQUENCE [LARGE SCALE MRNA]</scope>
    <source>
        <strain>C57BL/6J</strain>
        <tissue>Brain</tissue>
    </source>
</reference>
<reference key="3">
    <citation type="journal article" date="2005" name="Science">
        <title>The transcriptional landscape of the mammalian genome.</title>
        <authorList>
            <person name="Carninci P."/>
            <person name="Kasukawa T."/>
            <person name="Katayama S."/>
            <person name="Gough J."/>
            <person name="Frith M.C."/>
            <person name="Maeda N."/>
            <person name="Oyama R."/>
            <person name="Ravasi T."/>
            <person name="Lenhard B."/>
            <person name="Wells C."/>
            <person name="Kodzius R."/>
            <person name="Shimokawa K."/>
            <person name="Bajic V.B."/>
            <person name="Brenner S.E."/>
            <person name="Batalov S."/>
            <person name="Forrest A.R."/>
            <person name="Zavolan M."/>
            <person name="Davis M.J."/>
            <person name="Wilming L.G."/>
            <person name="Aidinis V."/>
            <person name="Allen J.E."/>
            <person name="Ambesi-Impiombato A."/>
            <person name="Apweiler R."/>
            <person name="Aturaliya R.N."/>
            <person name="Bailey T.L."/>
            <person name="Bansal M."/>
            <person name="Baxter L."/>
            <person name="Beisel K.W."/>
            <person name="Bersano T."/>
            <person name="Bono H."/>
            <person name="Chalk A.M."/>
            <person name="Chiu K.P."/>
            <person name="Choudhary V."/>
            <person name="Christoffels A."/>
            <person name="Clutterbuck D.R."/>
            <person name="Crowe M.L."/>
            <person name="Dalla E."/>
            <person name="Dalrymple B.P."/>
            <person name="de Bono B."/>
            <person name="Della Gatta G."/>
            <person name="di Bernardo D."/>
            <person name="Down T."/>
            <person name="Engstrom P."/>
            <person name="Fagiolini M."/>
            <person name="Faulkner G."/>
            <person name="Fletcher C.F."/>
            <person name="Fukushima T."/>
            <person name="Furuno M."/>
            <person name="Futaki S."/>
            <person name="Gariboldi M."/>
            <person name="Georgii-Hemming P."/>
            <person name="Gingeras T.R."/>
            <person name="Gojobori T."/>
            <person name="Green R.E."/>
            <person name="Gustincich S."/>
            <person name="Harbers M."/>
            <person name="Hayashi Y."/>
            <person name="Hensch T.K."/>
            <person name="Hirokawa N."/>
            <person name="Hill D."/>
            <person name="Huminiecki L."/>
            <person name="Iacono M."/>
            <person name="Ikeo K."/>
            <person name="Iwama A."/>
            <person name="Ishikawa T."/>
            <person name="Jakt M."/>
            <person name="Kanapin A."/>
            <person name="Katoh M."/>
            <person name="Kawasawa Y."/>
            <person name="Kelso J."/>
            <person name="Kitamura H."/>
            <person name="Kitano H."/>
            <person name="Kollias G."/>
            <person name="Krishnan S.P."/>
            <person name="Kruger A."/>
            <person name="Kummerfeld S.K."/>
            <person name="Kurochkin I.V."/>
            <person name="Lareau L.F."/>
            <person name="Lazarevic D."/>
            <person name="Lipovich L."/>
            <person name="Liu J."/>
            <person name="Liuni S."/>
            <person name="McWilliam S."/>
            <person name="Madan Babu M."/>
            <person name="Madera M."/>
            <person name="Marchionni L."/>
            <person name="Matsuda H."/>
            <person name="Matsuzawa S."/>
            <person name="Miki H."/>
            <person name="Mignone F."/>
            <person name="Miyake S."/>
            <person name="Morris K."/>
            <person name="Mottagui-Tabar S."/>
            <person name="Mulder N."/>
            <person name="Nakano N."/>
            <person name="Nakauchi H."/>
            <person name="Ng P."/>
            <person name="Nilsson R."/>
            <person name="Nishiguchi S."/>
            <person name="Nishikawa S."/>
            <person name="Nori F."/>
            <person name="Ohara O."/>
            <person name="Okazaki Y."/>
            <person name="Orlando V."/>
            <person name="Pang K.C."/>
            <person name="Pavan W.J."/>
            <person name="Pavesi G."/>
            <person name="Pesole G."/>
            <person name="Petrovsky N."/>
            <person name="Piazza S."/>
            <person name="Reed J."/>
            <person name="Reid J.F."/>
            <person name="Ring B.Z."/>
            <person name="Ringwald M."/>
            <person name="Rost B."/>
            <person name="Ruan Y."/>
            <person name="Salzberg S.L."/>
            <person name="Sandelin A."/>
            <person name="Schneider C."/>
            <person name="Schoenbach C."/>
            <person name="Sekiguchi K."/>
            <person name="Semple C.A."/>
            <person name="Seno S."/>
            <person name="Sessa L."/>
            <person name="Sheng Y."/>
            <person name="Shibata Y."/>
            <person name="Shimada H."/>
            <person name="Shimada K."/>
            <person name="Silva D."/>
            <person name="Sinclair B."/>
            <person name="Sperling S."/>
            <person name="Stupka E."/>
            <person name="Sugiura K."/>
            <person name="Sultana R."/>
            <person name="Takenaka Y."/>
            <person name="Taki K."/>
            <person name="Tammoja K."/>
            <person name="Tan S.L."/>
            <person name="Tang S."/>
            <person name="Taylor M.S."/>
            <person name="Tegner J."/>
            <person name="Teichmann S.A."/>
            <person name="Ueda H.R."/>
            <person name="van Nimwegen E."/>
            <person name="Verardo R."/>
            <person name="Wei C.L."/>
            <person name="Yagi K."/>
            <person name="Yamanishi H."/>
            <person name="Zabarovsky E."/>
            <person name="Zhu S."/>
            <person name="Zimmer A."/>
            <person name="Hide W."/>
            <person name="Bult C."/>
            <person name="Grimmond S.M."/>
            <person name="Teasdale R.D."/>
            <person name="Liu E.T."/>
            <person name="Brusic V."/>
            <person name="Quackenbush J."/>
            <person name="Wahlestedt C."/>
            <person name="Mattick J.S."/>
            <person name="Hume D.A."/>
            <person name="Kai C."/>
            <person name="Sasaki D."/>
            <person name="Tomaru Y."/>
            <person name="Fukuda S."/>
            <person name="Kanamori-Katayama M."/>
            <person name="Suzuki M."/>
            <person name="Aoki J."/>
            <person name="Arakawa T."/>
            <person name="Iida J."/>
            <person name="Imamura K."/>
            <person name="Itoh M."/>
            <person name="Kato T."/>
            <person name="Kawaji H."/>
            <person name="Kawagashira N."/>
            <person name="Kawashima T."/>
            <person name="Kojima M."/>
            <person name="Kondo S."/>
            <person name="Konno H."/>
            <person name="Nakano K."/>
            <person name="Ninomiya N."/>
            <person name="Nishio T."/>
            <person name="Okada M."/>
            <person name="Plessy C."/>
            <person name="Shibata K."/>
            <person name="Shiraki T."/>
            <person name="Suzuki S."/>
            <person name="Tagami M."/>
            <person name="Waki K."/>
            <person name="Watahiki A."/>
            <person name="Okamura-Oho Y."/>
            <person name="Suzuki H."/>
            <person name="Kawai J."/>
            <person name="Hayashizaki Y."/>
        </authorList>
    </citation>
    <scope>NUCLEOTIDE SEQUENCE [LARGE SCALE MRNA] OF 180-335</scope>
    <source>
        <strain>C57BL/6J</strain>
        <tissue>Head</tissue>
    </source>
</reference>
<reference key="4">
    <citation type="journal article" date="2001" name="Neuron">
        <title>Control of interneuron fate in the developing spinal cord by the progenitor homeodomain protein Dbx1.</title>
        <authorList>
            <person name="Pierani A."/>
            <person name="Moran-Rivard L."/>
            <person name="Sunshine M.J."/>
            <person name="Littman D.R."/>
            <person name="Goulding M."/>
            <person name="Jessell T.M."/>
        </authorList>
    </citation>
    <scope>FUNCTION</scope>
</reference>
<comment type="function">
    <text evidence="3">Could have a role in patterning the central nervous system during embryogenesis. Has a key role in regulating the distinct phenotypic features that distinguish two major classes of ventral interneurons, V0 and V1 neurons. Regulates the transcription factor profile, neurotransmitter phenotype, intraspinal migratory path and axonal trajectory of V0 neurons, features that differentiate them from an adjacent set of V1 neurons.</text>
</comment>
<comment type="subcellular location">
    <subcellularLocation>
        <location>Nucleus</location>
    </subcellularLocation>
</comment>
<comment type="developmental stage">
    <text>During early and mid-gestation, dbx expression is restricted to the telencephalon, diencephalon, dorsal mesencephalon and spinal cord. At later gestational stages, dbx expression continues in the dorsal mesencephalon and diencephalon, in which expression is more restricted than at the earlier stages.</text>
</comment>
<comment type="similarity">
    <text evidence="4">Belongs to the H2.0 homeobox family.</text>
</comment>